<reference key="1">
    <citation type="journal article" date="2004" name="Genome Res.">
        <title>The status, quality, and expansion of the NIH full-length cDNA project: the Mammalian Gene Collection (MGC).</title>
        <authorList>
            <consortium name="The MGC Project Team"/>
        </authorList>
    </citation>
    <scope>NUCLEOTIDE SEQUENCE [LARGE SCALE MRNA]</scope>
    <source>
        <tissue>Brain</tissue>
    </source>
</reference>
<reference key="2">
    <citation type="journal article" date="2006" name="Science">
        <title>The consensus coding sequences of human breast and colorectal cancers.</title>
        <authorList>
            <person name="Sjoeblom T."/>
            <person name="Jones S."/>
            <person name="Wood L.D."/>
            <person name="Parsons D.W."/>
            <person name="Lin J."/>
            <person name="Barber T.D."/>
            <person name="Mandelker D."/>
            <person name="Leary R.J."/>
            <person name="Ptak J."/>
            <person name="Silliman N."/>
            <person name="Szabo S."/>
            <person name="Buckhaults P."/>
            <person name="Farrell C."/>
            <person name="Meeh P."/>
            <person name="Markowitz S.D."/>
            <person name="Willis J."/>
            <person name="Dawson D."/>
            <person name="Willson J.K.V."/>
            <person name="Gazdar A.F."/>
            <person name="Hartigan J."/>
            <person name="Wu L."/>
            <person name="Liu C."/>
            <person name="Parmigiani G."/>
            <person name="Park B.H."/>
            <person name="Bachman K.E."/>
            <person name="Papadopoulos N."/>
            <person name="Vogelstein B."/>
            <person name="Kinzler K.W."/>
            <person name="Velculescu V.E."/>
        </authorList>
    </citation>
    <scope>VARIANT [LARGE SCALE ANALYSIS] ASN-445</scope>
</reference>
<reference key="3">
    <citation type="journal article" date="2011" name="Arch. Neurol.">
        <title>Resequencing of 29 candidate genes in patients with familial and sporadic amyotrophic lateral sclerosis.</title>
        <authorList>
            <person name="Daoud H."/>
            <person name="Valdmanis P.N."/>
            <person name="Gros-Louis F."/>
            <person name="Belzil V."/>
            <person name="Spiegelman D."/>
            <person name="Henrion E."/>
            <person name="Diallo O."/>
            <person name="Desjarlais A."/>
            <person name="Gauthier J."/>
            <person name="Camu W."/>
            <person name="Dion P.A."/>
            <person name="Rouleau G.A."/>
        </authorList>
    </citation>
    <scope>VARIANTS MET-154; VAL-238 AND VAL-353</scope>
</reference>
<accession>Q86SS6</accession>
<sequence length="491" mass="56188">MPGARDALCHQALQLLAELCARGALEHDSCQDFIYHLRDRARPRLRDPDISVSLLTLVVTACGLALFGVSLFVSWKLCWVPWRERGLPSGSKDNNQEPLNYMDTETNEQENSEDFLDPPTPCPDSSMKISHTSPDIPLSTQTGIQENCAHGVRVQRQVTEPTSSARHNSIRRQLNLSNPDFNIQQLQKQEQLTGIGRIKPELYKQRSLDNDDGRRSNSKACGKLNFILKYDCDLEQLIVKIHKAVNLPAKDFSGTSDPYVKIYLLPDRKTKHQTKVHRKTLNPVFDEVFLFPVPYNDLEARKLHFSVYDFDRFSRHDLIGQVVVDHFLDLADFPRECILWKDIEYVTNDNVDLGELMFSLCYLPTAGRLTITIIKARNLKAMDITGASDPYVKVSLMCDGRRLKKRKTSTKRNTLNPVYNEAIVFDVPPENIDQIHLSIAVMDYDRVGHNEIIGVCQVGNEAERLGRDHWSEMLSYPRKPIAHWHSLVEKR</sequence>
<gene>
    <name type="primary">SYT9</name>
</gene>
<proteinExistence type="evidence at protein level"/>
<name>SYT9_HUMAN</name>
<protein>
    <recommendedName>
        <fullName>Synaptotagmin-9</fullName>
    </recommendedName>
    <alternativeName>
        <fullName>Synaptotagmin IX</fullName>
        <shortName>SytIX</shortName>
    </alternativeName>
</protein>
<feature type="chain" id="PRO_0000183962" description="Synaptotagmin-9">
    <location>
        <begin position="1"/>
        <end position="491"/>
    </location>
</feature>
<feature type="topological domain" description="Vesicular" evidence="5">
    <location>
        <begin position="1"/>
        <end position="52"/>
    </location>
</feature>
<feature type="transmembrane region" description="Helical" evidence="5">
    <location>
        <begin position="53"/>
        <end position="73"/>
    </location>
</feature>
<feature type="topological domain" description="Cytoplasmic" evidence="5">
    <location>
        <begin position="74"/>
        <end position="491"/>
    </location>
</feature>
<feature type="domain" description="C2 1" evidence="6">
    <location>
        <begin position="220"/>
        <end position="341"/>
    </location>
</feature>
<feature type="domain" description="C2 2" evidence="6">
    <location>
        <begin position="352"/>
        <end position="485"/>
    </location>
</feature>
<feature type="region of interest" description="Cysteine motif" evidence="2">
    <location>
        <begin position="9"/>
        <end position="31"/>
    </location>
</feature>
<feature type="binding site" evidence="6">
    <location>
        <position position="251"/>
    </location>
    <ligand>
        <name>Ca(2+)</name>
        <dbReference type="ChEBI" id="CHEBI:29108"/>
        <label>1</label>
    </ligand>
</feature>
<feature type="binding site" evidence="6">
    <location>
        <position position="251"/>
    </location>
    <ligand>
        <name>Ca(2+)</name>
        <dbReference type="ChEBI" id="CHEBI:29108"/>
        <label>2</label>
    </ligand>
</feature>
<feature type="binding site" evidence="6">
    <location>
        <position position="257"/>
    </location>
    <ligand>
        <name>Ca(2+)</name>
        <dbReference type="ChEBI" id="CHEBI:29108"/>
        <label>1</label>
    </ligand>
</feature>
<feature type="binding site" evidence="6">
    <location>
        <position position="309"/>
    </location>
    <ligand>
        <name>Ca(2+)</name>
        <dbReference type="ChEBI" id="CHEBI:29108"/>
        <label>1</label>
    </ligand>
</feature>
<feature type="binding site" evidence="6">
    <location>
        <position position="309"/>
    </location>
    <ligand>
        <name>Ca(2+)</name>
        <dbReference type="ChEBI" id="CHEBI:29108"/>
        <label>2</label>
    </ligand>
</feature>
<feature type="binding site" evidence="6">
    <location>
        <position position="310"/>
    </location>
    <ligand>
        <name>Ca(2+)</name>
        <dbReference type="ChEBI" id="CHEBI:29108"/>
        <label>1</label>
    </ligand>
</feature>
<feature type="binding site" evidence="6">
    <location>
        <position position="311"/>
    </location>
    <ligand>
        <name>Ca(2+)</name>
        <dbReference type="ChEBI" id="CHEBI:29108"/>
        <label>1</label>
    </ligand>
</feature>
<feature type="binding site" evidence="6">
    <location>
        <position position="311"/>
    </location>
    <ligand>
        <name>Ca(2+)</name>
        <dbReference type="ChEBI" id="CHEBI:29108"/>
        <label>2</label>
    </ligand>
</feature>
<feature type="binding site" evidence="6">
    <location>
        <position position="311"/>
    </location>
    <ligand>
        <name>Ca(2+)</name>
        <dbReference type="ChEBI" id="CHEBI:29108"/>
        <label>3</label>
    </ligand>
</feature>
<feature type="binding site" evidence="6">
    <location>
        <position position="314"/>
    </location>
    <ligand>
        <name>Ca(2+)</name>
        <dbReference type="ChEBI" id="CHEBI:29108"/>
        <label>3</label>
    </ligand>
</feature>
<feature type="binding site" evidence="6">
    <location>
        <position position="317"/>
    </location>
    <ligand>
        <name>Ca(2+)</name>
        <dbReference type="ChEBI" id="CHEBI:29108"/>
        <label>2</label>
    </ligand>
</feature>
<feature type="binding site" evidence="6">
    <location>
        <position position="317"/>
    </location>
    <ligand>
        <name>Ca(2+)</name>
        <dbReference type="ChEBI" id="CHEBI:29108"/>
        <label>3</label>
    </ligand>
</feature>
<feature type="binding site" evidence="6">
    <location>
        <position position="383"/>
    </location>
    <ligand>
        <name>Ca(2+)</name>
        <dbReference type="ChEBI" id="CHEBI:29108"/>
        <label>4</label>
    </ligand>
</feature>
<feature type="binding site" evidence="6">
    <location>
        <position position="389"/>
    </location>
    <ligand>
        <name>Ca(2+)</name>
        <dbReference type="ChEBI" id="CHEBI:29108"/>
        <label>4</label>
    </ligand>
</feature>
<feature type="binding site" evidence="6">
    <location>
        <position position="443"/>
    </location>
    <ligand>
        <name>Ca(2+)</name>
        <dbReference type="ChEBI" id="CHEBI:29108"/>
        <label>4</label>
    </ligand>
</feature>
<feature type="binding site" evidence="6">
    <location>
        <position position="445"/>
    </location>
    <ligand>
        <name>Ca(2+)</name>
        <dbReference type="ChEBI" id="CHEBI:29108"/>
        <label>4</label>
    </ligand>
</feature>
<feature type="modified residue" description="Phosphoserine" evidence="4">
    <location>
        <position position="177"/>
    </location>
</feature>
<feature type="sequence variant" id="VAR_065760" description="In dbSNP:rs78477754." evidence="8">
    <original>V</original>
    <variation>M</variation>
    <location>
        <position position="154"/>
    </location>
</feature>
<feature type="sequence variant" id="VAR_065761" description="In dbSNP:rs1001166978." evidence="8">
    <original>I</original>
    <variation>V</variation>
    <location>
        <position position="238"/>
    </location>
</feature>
<feature type="sequence variant" id="VAR_065762" description="In dbSNP:rs117876446." evidence="8">
    <original>L</original>
    <variation>V</variation>
    <location>
        <position position="353"/>
    </location>
</feature>
<feature type="sequence variant" id="VAR_036390" description="In a colorectal cancer sample; somatic mutation; dbSNP:rs1847286049." evidence="7">
    <original>D</original>
    <variation>N</variation>
    <location>
        <position position="445"/>
    </location>
</feature>
<organism>
    <name type="scientific">Homo sapiens</name>
    <name type="common">Human</name>
    <dbReference type="NCBI Taxonomy" id="9606"/>
    <lineage>
        <taxon>Eukaryota</taxon>
        <taxon>Metazoa</taxon>
        <taxon>Chordata</taxon>
        <taxon>Craniata</taxon>
        <taxon>Vertebrata</taxon>
        <taxon>Euteleostomi</taxon>
        <taxon>Mammalia</taxon>
        <taxon>Eutheria</taxon>
        <taxon>Euarchontoglires</taxon>
        <taxon>Primates</taxon>
        <taxon>Haplorrhini</taxon>
        <taxon>Catarrhini</taxon>
        <taxon>Hominidae</taxon>
        <taxon>Homo</taxon>
    </lineage>
</organism>
<comment type="function">
    <text>May be involved in Ca(2+)-dependent exocytosis of secretory vesicles through Ca(2+) and phospholipid binding to the C2 domain or may serve as Ca(2+) sensors in the process of vesicular trafficking and exocytosis.</text>
</comment>
<comment type="cofactor">
    <cofactor evidence="6">
        <name>Ca(2+)</name>
        <dbReference type="ChEBI" id="CHEBI:29108"/>
    </cofactor>
    <text evidence="3">Binds 3 Ca(2+) ions per subunit. The ions are bound to the C2 domains.</text>
</comment>
<comment type="subunit">
    <text evidence="4">Homodimer; disulfide-linked via the cysteine motif. Can also form heterodimers with SYT3, SYT6, SYT7 and SYT10.</text>
</comment>
<comment type="interaction">
    <interactant intactId="EBI-19129467">
        <id>Q86SS6</id>
    </interactant>
    <interactant intactId="EBI-1045825">
        <id>P55061</id>
        <label>TMBIM6</label>
    </interactant>
    <organismsDiffer>false</organismsDiffer>
    <experiments>3</experiments>
</comment>
<comment type="interaction">
    <interactant intactId="EBI-19129467">
        <id>Q86SS6</id>
    </interactant>
    <interactant intactId="EBI-12903814">
        <id>O95807</id>
        <label>TMEM50A</label>
    </interactant>
    <organismsDiffer>false</organismsDiffer>
    <experiments>3</experiments>
</comment>
<comment type="interaction">
    <interactant intactId="EBI-19129467">
        <id>Q86SS6</id>
    </interactant>
    <interactant intactId="EBI-12237619">
        <id>O75841</id>
        <label>UPK1B</label>
    </interactant>
    <organismsDiffer>false</organismsDiffer>
    <experiments>3</experiments>
</comment>
<comment type="subcellular location">
    <subcellularLocation>
        <location evidence="1">Cytoplasmic vesicle</location>
        <location evidence="1">Secretory vesicle</location>
        <location evidence="1">Synaptic vesicle membrane</location>
        <topology evidence="1">Single-pass membrane protein</topology>
    </subcellularLocation>
</comment>
<comment type="domain">
    <text evidence="2">The cysteine motif mediates homo- or heterodimer formation via formation of disulfide bonds.</text>
</comment>
<comment type="similarity">
    <text evidence="9">Belongs to the synaptotagmin family.</text>
</comment>
<keyword id="KW-0106">Calcium</keyword>
<keyword id="KW-0968">Cytoplasmic vesicle</keyword>
<keyword id="KW-1015">Disulfide bond</keyword>
<keyword id="KW-0472">Membrane</keyword>
<keyword id="KW-0479">Metal-binding</keyword>
<keyword id="KW-0597">Phosphoprotein</keyword>
<keyword id="KW-1267">Proteomics identification</keyword>
<keyword id="KW-1185">Reference proteome</keyword>
<keyword id="KW-0677">Repeat</keyword>
<keyword id="KW-0770">Synapse</keyword>
<keyword id="KW-0812">Transmembrane</keyword>
<keyword id="KW-1133">Transmembrane helix</keyword>
<dbReference type="EMBL" id="BC046367">
    <property type="protein sequence ID" value="AAH46367.1"/>
    <property type="molecule type" value="mRNA"/>
</dbReference>
<dbReference type="CCDS" id="CCDS7778.1"/>
<dbReference type="RefSeq" id="NP_783860.1">
    <property type="nucleotide sequence ID" value="NM_175733.4"/>
</dbReference>
<dbReference type="SMR" id="Q86SS6"/>
<dbReference type="BioGRID" id="126802">
    <property type="interactions" value="20"/>
</dbReference>
<dbReference type="ELM" id="Q86SS6"/>
<dbReference type="FunCoup" id="Q86SS6">
    <property type="interactions" value="80"/>
</dbReference>
<dbReference type="IntAct" id="Q86SS6">
    <property type="interactions" value="6"/>
</dbReference>
<dbReference type="STRING" id="9606.ENSP00000324419"/>
<dbReference type="iPTMnet" id="Q86SS6"/>
<dbReference type="PhosphoSitePlus" id="Q86SS6"/>
<dbReference type="BioMuta" id="SYT9"/>
<dbReference type="DMDM" id="33112457"/>
<dbReference type="MassIVE" id="Q86SS6"/>
<dbReference type="PaxDb" id="9606-ENSP00000324419"/>
<dbReference type="PeptideAtlas" id="Q86SS6"/>
<dbReference type="ProteomicsDB" id="69631"/>
<dbReference type="Antibodypedia" id="42311">
    <property type="antibodies" value="153 antibodies from 28 providers"/>
</dbReference>
<dbReference type="DNASU" id="143425"/>
<dbReference type="Ensembl" id="ENST00000318881.11">
    <property type="protein sequence ID" value="ENSP00000324419.6"/>
    <property type="gene ID" value="ENSG00000170743.17"/>
</dbReference>
<dbReference type="GeneID" id="143425"/>
<dbReference type="KEGG" id="hsa:143425"/>
<dbReference type="MANE-Select" id="ENST00000318881.11">
    <property type="protein sequence ID" value="ENSP00000324419.6"/>
    <property type="RefSeq nucleotide sequence ID" value="NM_175733.4"/>
    <property type="RefSeq protein sequence ID" value="NP_783860.1"/>
</dbReference>
<dbReference type="UCSC" id="uc001mfe.4">
    <property type="organism name" value="human"/>
</dbReference>
<dbReference type="AGR" id="HGNC:19265"/>
<dbReference type="CTD" id="143425"/>
<dbReference type="DisGeNET" id="143425"/>
<dbReference type="GeneCards" id="SYT9"/>
<dbReference type="HGNC" id="HGNC:19265">
    <property type="gene designation" value="SYT9"/>
</dbReference>
<dbReference type="HPA" id="ENSG00000170743">
    <property type="expression patterns" value="Tissue enhanced (brain, retina)"/>
</dbReference>
<dbReference type="MIM" id="613528">
    <property type="type" value="gene"/>
</dbReference>
<dbReference type="neXtProt" id="NX_Q86SS6"/>
<dbReference type="OpenTargets" id="ENSG00000170743"/>
<dbReference type="PharmGKB" id="PA134984583"/>
<dbReference type="VEuPathDB" id="HostDB:ENSG00000170743"/>
<dbReference type="eggNOG" id="KOG1028">
    <property type="taxonomic scope" value="Eukaryota"/>
</dbReference>
<dbReference type="GeneTree" id="ENSGT00940000155948"/>
<dbReference type="HOGENOM" id="CLU_023008_8_3_1"/>
<dbReference type="InParanoid" id="Q86SS6"/>
<dbReference type="OMA" id="TRHNSIR"/>
<dbReference type="OrthoDB" id="67700at2759"/>
<dbReference type="PAN-GO" id="Q86SS6">
    <property type="GO annotations" value="12 GO annotations based on evolutionary models"/>
</dbReference>
<dbReference type="PhylomeDB" id="Q86SS6"/>
<dbReference type="TreeFam" id="TF315600"/>
<dbReference type="PathwayCommons" id="Q86SS6"/>
<dbReference type="Reactome" id="R-HSA-6794361">
    <property type="pathway name" value="Neurexins and neuroligins"/>
</dbReference>
<dbReference type="Reactome" id="R-HSA-8856825">
    <property type="pathway name" value="Cargo recognition for clathrin-mediated endocytosis"/>
</dbReference>
<dbReference type="Reactome" id="R-HSA-8856828">
    <property type="pathway name" value="Clathrin-mediated endocytosis"/>
</dbReference>
<dbReference type="SignaLink" id="Q86SS6"/>
<dbReference type="BioGRID-ORCS" id="143425">
    <property type="hits" value="9 hits in 1146 CRISPR screens"/>
</dbReference>
<dbReference type="ChiTaRS" id="SYT9">
    <property type="organism name" value="human"/>
</dbReference>
<dbReference type="GeneWiki" id="SYT9"/>
<dbReference type="GenomeRNAi" id="143425"/>
<dbReference type="Pharos" id="Q86SS6">
    <property type="development level" value="Tbio"/>
</dbReference>
<dbReference type="PRO" id="PR:Q86SS6"/>
<dbReference type="Proteomes" id="UP000005640">
    <property type="component" value="Chromosome 11"/>
</dbReference>
<dbReference type="RNAct" id="Q86SS6">
    <property type="molecule type" value="protein"/>
</dbReference>
<dbReference type="Bgee" id="ENSG00000170743">
    <property type="expression patterns" value="Expressed in medial globus pallidus and 124 other cell types or tissues"/>
</dbReference>
<dbReference type="ExpressionAtlas" id="Q86SS6">
    <property type="expression patterns" value="baseline and differential"/>
</dbReference>
<dbReference type="GO" id="GO:0030669">
    <property type="term" value="C:clathrin-coated endocytic vesicle membrane"/>
    <property type="evidence" value="ECO:0000304"/>
    <property type="project" value="Reactome"/>
</dbReference>
<dbReference type="GO" id="GO:0031045">
    <property type="term" value="C:dense core granule"/>
    <property type="evidence" value="ECO:0000318"/>
    <property type="project" value="GO_Central"/>
</dbReference>
<dbReference type="GO" id="GO:0070382">
    <property type="term" value="C:exocytic vesicle"/>
    <property type="evidence" value="ECO:0000318"/>
    <property type="project" value="GO_Central"/>
</dbReference>
<dbReference type="GO" id="GO:0098686">
    <property type="term" value="C:hippocampal mossy fiber to CA3 synapse"/>
    <property type="evidence" value="ECO:0007669"/>
    <property type="project" value="Ensembl"/>
</dbReference>
<dbReference type="GO" id="GO:0005886">
    <property type="term" value="C:plasma membrane"/>
    <property type="evidence" value="ECO:0000318"/>
    <property type="project" value="GO_Central"/>
</dbReference>
<dbReference type="GO" id="GO:0030672">
    <property type="term" value="C:synaptic vesicle membrane"/>
    <property type="evidence" value="ECO:0007669"/>
    <property type="project" value="UniProtKB-SubCell"/>
</dbReference>
<dbReference type="GO" id="GO:0061891">
    <property type="term" value="F:calcium ion sensor activity"/>
    <property type="evidence" value="ECO:0000318"/>
    <property type="project" value="GO_Central"/>
</dbReference>
<dbReference type="GO" id="GO:0005544">
    <property type="term" value="F:calcium-dependent phospholipid binding"/>
    <property type="evidence" value="ECO:0000318"/>
    <property type="project" value="GO_Central"/>
</dbReference>
<dbReference type="GO" id="GO:0042802">
    <property type="term" value="F:identical protein binding"/>
    <property type="evidence" value="ECO:0007669"/>
    <property type="project" value="Ensembl"/>
</dbReference>
<dbReference type="GO" id="GO:0046872">
    <property type="term" value="F:metal ion binding"/>
    <property type="evidence" value="ECO:0007669"/>
    <property type="project" value="UniProtKB-KW"/>
</dbReference>
<dbReference type="GO" id="GO:0005546">
    <property type="term" value="F:phosphatidylinositol-4,5-bisphosphate binding"/>
    <property type="evidence" value="ECO:0007669"/>
    <property type="project" value="Ensembl"/>
</dbReference>
<dbReference type="GO" id="GO:0001786">
    <property type="term" value="F:phosphatidylserine binding"/>
    <property type="evidence" value="ECO:0007669"/>
    <property type="project" value="Ensembl"/>
</dbReference>
<dbReference type="GO" id="GO:0000149">
    <property type="term" value="F:SNARE binding"/>
    <property type="evidence" value="ECO:0000318"/>
    <property type="project" value="GO_Central"/>
</dbReference>
<dbReference type="GO" id="GO:0099502">
    <property type="term" value="P:calcium-dependent activation of synaptic vesicle fusion"/>
    <property type="evidence" value="ECO:0007669"/>
    <property type="project" value="Ensembl"/>
</dbReference>
<dbReference type="GO" id="GO:0007268">
    <property type="term" value="P:chemical synaptic transmission"/>
    <property type="evidence" value="ECO:0000318"/>
    <property type="project" value="GO_Central"/>
</dbReference>
<dbReference type="GO" id="GO:0031340">
    <property type="term" value="P:positive regulation of vesicle fusion"/>
    <property type="evidence" value="ECO:0000318"/>
    <property type="project" value="GO_Central"/>
</dbReference>
<dbReference type="GO" id="GO:0017158">
    <property type="term" value="P:regulation of calcium ion-dependent exocytosis"/>
    <property type="evidence" value="ECO:0000318"/>
    <property type="project" value="GO_Central"/>
</dbReference>
<dbReference type="GO" id="GO:0016192">
    <property type="term" value="P:vesicle-mediated transport"/>
    <property type="evidence" value="ECO:0000318"/>
    <property type="project" value="GO_Central"/>
</dbReference>
<dbReference type="CDD" id="cd08403">
    <property type="entry name" value="C2B_Synaptotagmin-3-5-6-9-10"/>
    <property type="match status" value="1"/>
</dbReference>
<dbReference type="FunFam" id="2.60.40.150:FF:000005">
    <property type="entry name" value="Synaptotagmin 6"/>
    <property type="match status" value="1"/>
</dbReference>
<dbReference type="FunFam" id="2.60.40.150:FF:000011">
    <property type="entry name" value="Synaptotagmin 6"/>
    <property type="match status" value="1"/>
</dbReference>
<dbReference type="Gene3D" id="2.60.40.150">
    <property type="entry name" value="C2 domain"/>
    <property type="match status" value="2"/>
</dbReference>
<dbReference type="InterPro" id="IPR000008">
    <property type="entry name" value="C2_dom"/>
</dbReference>
<dbReference type="InterPro" id="IPR035892">
    <property type="entry name" value="C2_domain_sf"/>
</dbReference>
<dbReference type="InterPro" id="IPR001565">
    <property type="entry name" value="Synaptotagmin"/>
</dbReference>
<dbReference type="PANTHER" id="PTHR10024">
    <property type="entry name" value="SYNAPTOTAGMIN"/>
    <property type="match status" value="1"/>
</dbReference>
<dbReference type="PANTHER" id="PTHR10024:SF180">
    <property type="entry name" value="SYNAPTOTAGMIN-9"/>
    <property type="match status" value="1"/>
</dbReference>
<dbReference type="Pfam" id="PF00168">
    <property type="entry name" value="C2"/>
    <property type="match status" value="2"/>
</dbReference>
<dbReference type="PRINTS" id="PR00360">
    <property type="entry name" value="C2DOMAIN"/>
</dbReference>
<dbReference type="PRINTS" id="PR00399">
    <property type="entry name" value="SYNAPTOTAGMN"/>
</dbReference>
<dbReference type="SMART" id="SM00239">
    <property type="entry name" value="C2"/>
    <property type="match status" value="2"/>
</dbReference>
<dbReference type="SUPFAM" id="SSF49562">
    <property type="entry name" value="C2 domain (Calcium/lipid-binding domain, CaLB)"/>
    <property type="match status" value="2"/>
</dbReference>
<dbReference type="PROSITE" id="PS50004">
    <property type="entry name" value="C2"/>
    <property type="match status" value="2"/>
</dbReference>
<evidence type="ECO:0000250" key="1"/>
<evidence type="ECO:0000250" key="2">
    <source>
        <dbReference type="UniProtKB" id="O35681"/>
    </source>
</evidence>
<evidence type="ECO:0000250" key="3">
    <source>
        <dbReference type="UniProtKB" id="P40748"/>
    </source>
</evidence>
<evidence type="ECO:0000250" key="4">
    <source>
        <dbReference type="UniProtKB" id="Q9R0N9"/>
    </source>
</evidence>
<evidence type="ECO:0000255" key="5"/>
<evidence type="ECO:0000255" key="6">
    <source>
        <dbReference type="PROSITE-ProRule" id="PRU00041"/>
    </source>
</evidence>
<evidence type="ECO:0000269" key="7">
    <source>
    </source>
</evidence>
<evidence type="ECO:0000269" key="8">
    <source>
    </source>
</evidence>
<evidence type="ECO:0000305" key="9"/>